<name>PRDE1_CAEEL</name>
<keyword id="KW-0158">Chromosome</keyword>
<keyword id="KW-0539">Nucleus</keyword>
<keyword id="KW-1185">Reference proteome</keyword>
<keyword id="KW-0804">Transcription</keyword>
<keyword id="KW-0805">Transcription regulation</keyword>
<reference evidence="7" key="1">
    <citation type="journal article" date="1998" name="Science">
        <title>Genome sequence of the nematode C. elegans: a platform for investigating biology.</title>
        <authorList>
            <consortium name="The C. elegans sequencing consortium"/>
        </authorList>
    </citation>
    <scope>NUCLEOTIDE SEQUENCE [LARGE SCALE GENOMIC DNA]</scope>
    <source>
        <strain evidence="7">Bristol N2</strain>
    </source>
</reference>
<reference evidence="4" key="2">
    <citation type="journal article" date="2014" name="Dev. Cell">
        <title>The C. elegans SNAPc component SNPC-4 coats piRNA domains and is globally required for piRNA abundance.</title>
        <authorList>
            <person name="Kasper D.M."/>
            <person name="Wang G."/>
            <person name="Gardner K.E."/>
            <person name="Johnstone T.G."/>
            <person name="Reinke V."/>
        </authorList>
    </citation>
    <scope>FUNCTION</scope>
    <scope>SUBCELLULAR LOCATION</scope>
</reference>
<reference evidence="4" key="3">
    <citation type="journal article" date="2014" name="Genes Dev.">
        <title>PRDE-1 is a nuclear factor essential for the biogenesis of Ruby motif-dependent piRNAs in C. elegans.</title>
        <authorList>
            <person name="Weick E.M."/>
            <person name="Sarkies P."/>
            <person name="Silva N."/>
            <person name="Chen R.A."/>
            <person name="Moss S.M."/>
            <person name="Cording A.C."/>
            <person name="Ahringer J."/>
            <person name="Martinez-Perez E."/>
            <person name="Miska E.A."/>
        </authorList>
    </citation>
    <scope>FUNCTION</scope>
    <scope>SUBCELLULAR LOCATION</scope>
    <scope>TISSUE SPECIFICITY</scope>
</reference>
<accession>O17828</accession>
<evidence type="ECO:0000256" key="1">
    <source>
        <dbReference type="SAM" id="MobiDB-lite"/>
    </source>
</evidence>
<evidence type="ECO:0000269" key="2">
    <source>
    </source>
</evidence>
<evidence type="ECO:0000269" key="3">
    <source>
    </source>
</evidence>
<evidence type="ECO:0000305" key="4"/>
<evidence type="ECO:0000305" key="5">
    <source>
    </source>
</evidence>
<evidence type="ECO:0000305" key="6">
    <source>
    </source>
</evidence>
<evidence type="ECO:0000312" key="7">
    <source>
        <dbReference type="Proteomes" id="UP000001940"/>
    </source>
</evidence>
<evidence type="ECO:0000312" key="8">
    <source>
        <dbReference type="WormBase" id="F21A3.5"/>
    </source>
</evidence>
<sequence length="526" mass="61045">MNRNRKGHDLENIEHRFTDEDLAGLKEQKLFNGKWIILEKKEKRGAAYCYLVCDKPCKKFGILYLEIGEDNVTTIANQVDFYHQQSSLGYSHRFSALIDAGIINNHVFFMVVRIRAGPTLHDLLKCLSSDKMSVTTASFLAVDMISAIEILSASGWVLRNFDSKQWMLDIKTRQFYLADATDITVSSDKRHRAIDEIHLRTAESIDLHWKTGDLIYAPRSFVDRDQSHRMTELDMMEMMLYVLYDWTHGKLPWKSSKSRERIMEMKELFIENLQKEPEETNKVEQQIDVDVWFDIALRNFAKHLKVAKEEQEKLEKLPVRGGAWCPKGPRAGAQISTVNYRGIIDDFYKIVCSGRPAWALHWRDVMLDWDRKLENTPETSKMFEAYEKHQRSLEISEEWERLQATREHYTVMKNHTETEMAKNQAAIVEYLMPEEEAKEEPIDKKKDPEEEAAAAVVGKKRRGRKPKKKDDPKMELKDEVKDLKDFVVEESTSASSSAPKKRPCCSSGSPLKSSGGRRRGCEIRRK</sequence>
<proteinExistence type="evidence at transcript level"/>
<feature type="chain" id="PRO_0000433369" description="piRNA biogenesis factor prde-1" evidence="4">
    <location>
        <begin position="1"/>
        <end position="526"/>
    </location>
</feature>
<feature type="region of interest" description="Disordered" evidence="1">
    <location>
        <begin position="436"/>
        <end position="526"/>
    </location>
</feature>
<feature type="compositionally biased region" description="Basic and acidic residues" evidence="1">
    <location>
        <begin position="439"/>
        <end position="448"/>
    </location>
</feature>
<feature type="compositionally biased region" description="Basic residues" evidence="1">
    <location>
        <begin position="458"/>
        <end position="467"/>
    </location>
</feature>
<feature type="compositionally biased region" description="Basic and acidic residues" evidence="1">
    <location>
        <begin position="468"/>
        <end position="487"/>
    </location>
</feature>
<feature type="compositionally biased region" description="Low complexity" evidence="1">
    <location>
        <begin position="489"/>
        <end position="498"/>
    </location>
</feature>
<protein>
    <recommendedName>
        <fullName evidence="6">piRNA biogenesis factor prde-1</fullName>
    </recommendedName>
    <alternativeName>
        <fullName evidence="5">piRNA silencing defective protein 1</fullName>
    </alternativeName>
</protein>
<comment type="function">
    <text evidence="2 3">Nuclear factor required for the production of piwi-interacting RNA (piRNA) precursors (PubMed:24696457). Specifically required for piRNAs produced from loci associated with the Ruby motif (PubMed:24696457). Promotes binding of the transcription factor snpc-4 at piRNA genomic clusters (PubMed:25373775). Required for normal fertility (PubMed:24696457).</text>
</comment>
<comment type="subcellular location">
    <subcellularLocation>
        <location evidence="2 3">Nucleus</location>
    </subcellularLocation>
    <subcellularLocation>
        <location evidence="2">Chromosome</location>
    </subcellularLocation>
    <text evidence="2 3">Concentrated in nuclear foci of pachytene germ cells (PubMed:24696457, PubMed:25373775). Colocalizes with snpc-4 in nuclear foci in a mutually dependent fashion (PubMed:25373775).</text>
</comment>
<comment type="tissue specificity">
    <text evidence="2">Expressed in male and female germ cells.</text>
</comment>
<dbReference type="EMBL" id="BX284605">
    <property type="protein sequence ID" value="CAB04156.3"/>
    <property type="molecule type" value="Genomic_DNA"/>
</dbReference>
<dbReference type="RefSeq" id="NP_506866.3">
    <property type="nucleotide sequence ID" value="NM_074465.4"/>
</dbReference>
<dbReference type="SMR" id="O17828"/>
<dbReference type="FunCoup" id="O17828">
    <property type="interactions" value="1516"/>
</dbReference>
<dbReference type="STRING" id="6239.F21A3.5.1"/>
<dbReference type="PaxDb" id="6239-F21A3.5"/>
<dbReference type="EnsemblMetazoa" id="F21A3.5.1">
    <property type="protein sequence ID" value="F21A3.5.1"/>
    <property type="gene ID" value="WBGene00008995"/>
</dbReference>
<dbReference type="EnsemblMetazoa" id="F21A3.5.2">
    <property type="protein sequence ID" value="F21A3.5.2"/>
    <property type="gene ID" value="WBGene00008995"/>
</dbReference>
<dbReference type="GeneID" id="184750"/>
<dbReference type="KEGG" id="cel:CELE_F21A3.5"/>
<dbReference type="UCSC" id="F21A3.5">
    <property type="organism name" value="c. elegans"/>
</dbReference>
<dbReference type="AGR" id="WB:WBGene00008995"/>
<dbReference type="CTD" id="184750"/>
<dbReference type="WormBase" id="F21A3.5">
    <property type="protein sequence ID" value="CE44026"/>
    <property type="gene ID" value="WBGene00008995"/>
    <property type="gene designation" value="prde-1"/>
</dbReference>
<dbReference type="eggNOG" id="KOG1164">
    <property type="taxonomic scope" value="Eukaryota"/>
</dbReference>
<dbReference type="HOGENOM" id="CLU_555803_0_0_1"/>
<dbReference type="InParanoid" id="O17828"/>
<dbReference type="OMA" id="CPKGPRA"/>
<dbReference type="OrthoDB" id="5815041at2759"/>
<dbReference type="PhylomeDB" id="O17828"/>
<dbReference type="PRO" id="PR:O17828"/>
<dbReference type="Proteomes" id="UP000001940">
    <property type="component" value="Chromosome V"/>
</dbReference>
<dbReference type="Bgee" id="WBGene00008995">
    <property type="expression patterns" value="Expressed in tail neuron (C elegans) and 7 other cell types or tissues"/>
</dbReference>
<dbReference type="GO" id="GO:0030849">
    <property type="term" value="C:autosome"/>
    <property type="evidence" value="ECO:0000314"/>
    <property type="project" value="WormBase"/>
</dbReference>
<dbReference type="GO" id="GO:0005737">
    <property type="term" value="C:cytoplasm"/>
    <property type="evidence" value="ECO:0000318"/>
    <property type="project" value="GO_Central"/>
</dbReference>
<dbReference type="GO" id="GO:0005634">
    <property type="term" value="C:nucleus"/>
    <property type="evidence" value="ECO:0000318"/>
    <property type="project" value="GO_Central"/>
</dbReference>
<dbReference type="GO" id="GO:0004674">
    <property type="term" value="F:protein serine/threonine kinase activity"/>
    <property type="evidence" value="ECO:0000318"/>
    <property type="project" value="GO_Central"/>
</dbReference>
<dbReference type="GO" id="GO:0140543">
    <property type="term" value="P:positive regulation of piRNA transcription"/>
    <property type="evidence" value="ECO:0000315"/>
    <property type="project" value="WormBase"/>
</dbReference>
<dbReference type="GO" id="GO:0007165">
    <property type="term" value="P:signal transduction"/>
    <property type="evidence" value="ECO:0000318"/>
    <property type="project" value="GO_Central"/>
</dbReference>
<dbReference type="FunFam" id="1.10.510.10:FF:002046">
    <property type="entry name" value="piRNA biogenesis factor prde-1"/>
    <property type="match status" value="1"/>
</dbReference>
<dbReference type="Gene3D" id="1.10.510.10">
    <property type="entry name" value="Transferase(Phosphotransferase) domain 1"/>
    <property type="match status" value="1"/>
</dbReference>
<dbReference type="InterPro" id="IPR050235">
    <property type="entry name" value="CK1_Ser-Thr_kinase"/>
</dbReference>
<dbReference type="InterPro" id="IPR018247">
    <property type="entry name" value="EF_Hand_1_Ca_BS"/>
</dbReference>
<dbReference type="InterPro" id="IPR011009">
    <property type="entry name" value="Kinase-like_dom_sf"/>
</dbReference>
<dbReference type="PANTHER" id="PTHR11909">
    <property type="entry name" value="CASEIN KINASE-RELATED"/>
    <property type="match status" value="1"/>
</dbReference>
<dbReference type="SUPFAM" id="SSF56112">
    <property type="entry name" value="Protein kinase-like (PK-like)"/>
    <property type="match status" value="1"/>
</dbReference>
<gene>
    <name evidence="8" type="primary">prde-1</name>
    <name evidence="8" type="ORF">F21A3.5</name>
</gene>
<organism evidence="7">
    <name type="scientific">Caenorhabditis elegans</name>
    <dbReference type="NCBI Taxonomy" id="6239"/>
    <lineage>
        <taxon>Eukaryota</taxon>
        <taxon>Metazoa</taxon>
        <taxon>Ecdysozoa</taxon>
        <taxon>Nematoda</taxon>
        <taxon>Chromadorea</taxon>
        <taxon>Rhabditida</taxon>
        <taxon>Rhabditina</taxon>
        <taxon>Rhabditomorpha</taxon>
        <taxon>Rhabditoidea</taxon>
        <taxon>Rhabditidae</taxon>
        <taxon>Peloderinae</taxon>
        <taxon>Caenorhabditis</taxon>
    </lineage>
</organism>